<accession>Q2RFP5</accession>
<organism>
    <name type="scientific">Moorella thermoacetica (strain ATCC 39073 / JCM 9320)</name>
    <dbReference type="NCBI Taxonomy" id="264732"/>
    <lineage>
        <taxon>Bacteria</taxon>
        <taxon>Bacillati</taxon>
        <taxon>Bacillota</taxon>
        <taxon>Clostridia</taxon>
        <taxon>Moorellales</taxon>
        <taxon>Moorellaceae</taxon>
        <taxon>Moorella</taxon>
    </lineage>
</organism>
<evidence type="ECO:0000250" key="1"/>
<evidence type="ECO:0000255" key="2">
    <source>
        <dbReference type="HAMAP-Rule" id="MF_00118"/>
    </source>
</evidence>
<keyword id="KW-0963">Cytoplasm</keyword>
<keyword id="KW-0251">Elongation factor</keyword>
<keyword id="KW-0342">GTP-binding</keyword>
<keyword id="KW-0378">Hydrolase</keyword>
<keyword id="KW-0460">Magnesium</keyword>
<keyword id="KW-0479">Metal-binding</keyword>
<keyword id="KW-0547">Nucleotide-binding</keyword>
<keyword id="KW-0648">Protein biosynthesis</keyword>
<name>EFTU_MOOTA</name>
<proteinExistence type="inferred from homology"/>
<protein>
    <recommendedName>
        <fullName evidence="2">Elongation factor Tu</fullName>
        <shortName evidence="2">EF-Tu</shortName>
        <ecNumber evidence="2">3.6.5.3</ecNumber>
    </recommendedName>
</protein>
<sequence length="400" mass="44125">MAKQKYERTKPHVNVGTIGHVDHGKTTLTAAITFCLAKAGGAVPTAYDQIDKAPEERERGITIATAHVEYETEKRHYAHVDCPGHADYVKNMITGAAQMDGAILVVSAADGPMPQTREHILLARQVGVPYIVVFLNKVDQVDDPELLELVEMEVRELLTEYEFPGDEIPIVTGSALKAMECGCGKRECEWCGKVWELMDAVDSYIPTPERDTDKPFLMPIEDVFTITGRGTVTTGRVERGKVKVGDEVEIIGLRDEIRKTVVTGVEMFRKILDEAVAGDNIGTLLRGVDRKEVERGMVLAKPGSIKPHTKFNAEVYVLTKEEGGRHTPFFNGYRPQFYFRTTDVTGVVNLPEGVEMVMPGDNIRMTIELITPIAIEEGLRFAIREGGRTVGAGVVTGIIE</sequence>
<feature type="chain" id="PRO_1000015695" description="Elongation factor Tu">
    <location>
        <begin position="1"/>
        <end position="400"/>
    </location>
</feature>
<feature type="domain" description="tr-type G">
    <location>
        <begin position="10"/>
        <end position="209"/>
    </location>
</feature>
<feature type="region of interest" description="G1" evidence="1">
    <location>
        <begin position="19"/>
        <end position="26"/>
    </location>
</feature>
<feature type="region of interest" description="G2" evidence="1">
    <location>
        <begin position="60"/>
        <end position="64"/>
    </location>
</feature>
<feature type="region of interest" description="G3" evidence="1">
    <location>
        <begin position="81"/>
        <end position="84"/>
    </location>
</feature>
<feature type="region of interest" description="G4" evidence="1">
    <location>
        <begin position="136"/>
        <end position="139"/>
    </location>
</feature>
<feature type="region of interest" description="G5" evidence="1">
    <location>
        <begin position="174"/>
        <end position="176"/>
    </location>
</feature>
<feature type="binding site" evidence="2">
    <location>
        <begin position="19"/>
        <end position="26"/>
    </location>
    <ligand>
        <name>GTP</name>
        <dbReference type="ChEBI" id="CHEBI:37565"/>
    </ligand>
</feature>
<feature type="binding site" evidence="2">
    <location>
        <position position="26"/>
    </location>
    <ligand>
        <name>Mg(2+)</name>
        <dbReference type="ChEBI" id="CHEBI:18420"/>
    </ligand>
</feature>
<feature type="binding site" evidence="2">
    <location>
        <begin position="81"/>
        <end position="85"/>
    </location>
    <ligand>
        <name>GTP</name>
        <dbReference type="ChEBI" id="CHEBI:37565"/>
    </ligand>
</feature>
<feature type="binding site" evidence="2">
    <location>
        <begin position="136"/>
        <end position="139"/>
    </location>
    <ligand>
        <name>GTP</name>
        <dbReference type="ChEBI" id="CHEBI:37565"/>
    </ligand>
</feature>
<dbReference type="EC" id="3.6.5.3" evidence="2"/>
<dbReference type="EMBL" id="CP000232">
    <property type="protein sequence ID" value="ABC20744.1"/>
    <property type="molecule type" value="Genomic_DNA"/>
</dbReference>
<dbReference type="RefSeq" id="YP_431287.1">
    <property type="nucleotide sequence ID" value="NC_007644.1"/>
</dbReference>
<dbReference type="SMR" id="Q2RFP5"/>
<dbReference type="STRING" id="264732.Moth_2462"/>
<dbReference type="EnsemblBacteria" id="ABC20744">
    <property type="protein sequence ID" value="ABC20744"/>
    <property type="gene ID" value="Moth_2462"/>
</dbReference>
<dbReference type="KEGG" id="mta:Moth_2462"/>
<dbReference type="PATRIC" id="fig|264732.11.peg.2680"/>
<dbReference type="eggNOG" id="COG0050">
    <property type="taxonomic scope" value="Bacteria"/>
</dbReference>
<dbReference type="HOGENOM" id="CLU_007265_0_1_9"/>
<dbReference type="OrthoDB" id="9804504at2"/>
<dbReference type="GO" id="GO:0005829">
    <property type="term" value="C:cytosol"/>
    <property type="evidence" value="ECO:0007669"/>
    <property type="project" value="TreeGrafter"/>
</dbReference>
<dbReference type="GO" id="GO:0005525">
    <property type="term" value="F:GTP binding"/>
    <property type="evidence" value="ECO:0007669"/>
    <property type="project" value="UniProtKB-UniRule"/>
</dbReference>
<dbReference type="GO" id="GO:0003924">
    <property type="term" value="F:GTPase activity"/>
    <property type="evidence" value="ECO:0007669"/>
    <property type="project" value="InterPro"/>
</dbReference>
<dbReference type="GO" id="GO:0003746">
    <property type="term" value="F:translation elongation factor activity"/>
    <property type="evidence" value="ECO:0007669"/>
    <property type="project" value="UniProtKB-UniRule"/>
</dbReference>
<dbReference type="CDD" id="cd01884">
    <property type="entry name" value="EF_Tu"/>
    <property type="match status" value="1"/>
</dbReference>
<dbReference type="CDD" id="cd03697">
    <property type="entry name" value="EFTU_II"/>
    <property type="match status" value="1"/>
</dbReference>
<dbReference type="CDD" id="cd03707">
    <property type="entry name" value="EFTU_III"/>
    <property type="match status" value="1"/>
</dbReference>
<dbReference type="FunFam" id="2.40.30.10:FF:000001">
    <property type="entry name" value="Elongation factor Tu"/>
    <property type="match status" value="1"/>
</dbReference>
<dbReference type="FunFam" id="3.40.50.300:FF:000003">
    <property type="entry name" value="Elongation factor Tu"/>
    <property type="match status" value="1"/>
</dbReference>
<dbReference type="Gene3D" id="3.40.50.300">
    <property type="entry name" value="P-loop containing nucleotide triphosphate hydrolases"/>
    <property type="match status" value="1"/>
</dbReference>
<dbReference type="Gene3D" id="2.40.30.10">
    <property type="entry name" value="Translation factors"/>
    <property type="match status" value="2"/>
</dbReference>
<dbReference type="HAMAP" id="MF_00118_B">
    <property type="entry name" value="EF_Tu_B"/>
    <property type="match status" value="1"/>
</dbReference>
<dbReference type="InterPro" id="IPR041709">
    <property type="entry name" value="EF-Tu_GTP-bd"/>
</dbReference>
<dbReference type="InterPro" id="IPR050055">
    <property type="entry name" value="EF-Tu_GTPase"/>
</dbReference>
<dbReference type="InterPro" id="IPR004161">
    <property type="entry name" value="EFTu-like_2"/>
</dbReference>
<dbReference type="InterPro" id="IPR033720">
    <property type="entry name" value="EFTU_2"/>
</dbReference>
<dbReference type="InterPro" id="IPR031157">
    <property type="entry name" value="G_TR_CS"/>
</dbReference>
<dbReference type="InterPro" id="IPR027417">
    <property type="entry name" value="P-loop_NTPase"/>
</dbReference>
<dbReference type="InterPro" id="IPR005225">
    <property type="entry name" value="Small_GTP-bd"/>
</dbReference>
<dbReference type="InterPro" id="IPR000795">
    <property type="entry name" value="T_Tr_GTP-bd_dom"/>
</dbReference>
<dbReference type="InterPro" id="IPR009000">
    <property type="entry name" value="Transl_B-barrel_sf"/>
</dbReference>
<dbReference type="InterPro" id="IPR009001">
    <property type="entry name" value="Transl_elong_EF1A/Init_IF2_C"/>
</dbReference>
<dbReference type="InterPro" id="IPR004541">
    <property type="entry name" value="Transl_elong_EFTu/EF1A_bac/org"/>
</dbReference>
<dbReference type="InterPro" id="IPR004160">
    <property type="entry name" value="Transl_elong_EFTu/EF1A_C"/>
</dbReference>
<dbReference type="NCBIfam" id="TIGR00485">
    <property type="entry name" value="EF-Tu"/>
    <property type="match status" value="1"/>
</dbReference>
<dbReference type="NCBIfam" id="NF000766">
    <property type="entry name" value="PRK00049.1"/>
    <property type="match status" value="1"/>
</dbReference>
<dbReference type="NCBIfam" id="NF009372">
    <property type="entry name" value="PRK12735.1"/>
    <property type="match status" value="1"/>
</dbReference>
<dbReference type="NCBIfam" id="NF009373">
    <property type="entry name" value="PRK12736.1"/>
    <property type="match status" value="1"/>
</dbReference>
<dbReference type="NCBIfam" id="TIGR00231">
    <property type="entry name" value="small_GTP"/>
    <property type="match status" value="1"/>
</dbReference>
<dbReference type="PANTHER" id="PTHR43721:SF22">
    <property type="entry name" value="ELONGATION FACTOR TU, MITOCHONDRIAL"/>
    <property type="match status" value="1"/>
</dbReference>
<dbReference type="PANTHER" id="PTHR43721">
    <property type="entry name" value="ELONGATION FACTOR TU-RELATED"/>
    <property type="match status" value="1"/>
</dbReference>
<dbReference type="Pfam" id="PF00009">
    <property type="entry name" value="GTP_EFTU"/>
    <property type="match status" value="1"/>
</dbReference>
<dbReference type="Pfam" id="PF03144">
    <property type="entry name" value="GTP_EFTU_D2"/>
    <property type="match status" value="1"/>
</dbReference>
<dbReference type="Pfam" id="PF03143">
    <property type="entry name" value="GTP_EFTU_D3"/>
    <property type="match status" value="1"/>
</dbReference>
<dbReference type="PRINTS" id="PR00315">
    <property type="entry name" value="ELONGATNFCT"/>
</dbReference>
<dbReference type="SUPFAM" id="SSF50465">
    <property type="entry name" value="EF-Tu/eEF-1alpha/eIF2-gamma C-terminal domain"/>
    <property type="match status" value="1"/>
</dbReference>
<dbReference type="SUPFAM" id="SSF52540">
    <property type="entry name" value="P-loop containing nucleoside triphosphate hydrolases"/>
    <property type="match status" value="1"/>
</dbReference>
<dbReference type="SUPFAM" id="SSF50447">
    <property type="entry name" value="Translation proteins"/>
    <property type="match status" value="1"/>
</dbReference>
<dbReference type="PROSITE" id="PS00301">
    <property type="entry name" value="G_TR_1"/>
    <property type="match status" value="1"/>
</dbReference>
<dbReference type="PROSITE" id="PS51722">
    <property type="entry name" value="G_TR_2"/>
    <property type="match status" value="1"/>
</dbReference>
<comment type="function">
    <text evidence="2">GTP hydrolase that promotes the GTP-dependent binding of aminoacyl-tRNA to the A-site of ribosomes during protein biosynthesis.</text>
</comment>
<comment type="catalytic activity">
    <reaction evidence="2">
        <text>GTP + H2O = GDP + phosphate + H(+)</text>
        <dbReference type="Rhea" id="RHEA:19669"/>
        <dbReference type="ChEBI" id="CHEBI:15377"/>
        <dbReference type="ChEBI" id="CHEBI:15378"/>
        <dbReference type="ChEBI" id="CHEBI:37565"/>
        <dbReference type="ChEBI" id="CHEBI:43474"/>
        <dbReference type="ChEBI" id="CHEBI:58189"/>
        <dbReference type="EC" id="3.6.5.3"/>
    </reaction>
    <physiologicalReaction direction="left-to-right" evidence="2">
        <dbReference type="Rhea" id="RHEA:19670"/>
    </physiologicalReaction>
</comment>
<comment type="subunit">
    <text evidence="2">Monomer.</text>
</comment>
<comment type="subcellular location">
    <subcellularLocation>
        <location evidence="2">Cytoplasm</location>
    </subcellularLocation>
</comment>
<comment type="similarity">
    <text evidence="2">Belongs to the TRAFAC class translation factor GTPase superfamily. Classic translation factor GTPase family. EF-Tu/EF-1A subfamily.</text>
</comment>
<reference key="1">
    <citation type="journal article" date="2008" name="Environ. Microbiol.">
        <title>The complete genome sequence of Moorella thermoacetica (f. Clostridium thermoaceticum).</title>
        <authorList>
            <person name="Pierce E."/>
            <person name="Xie G."/>
            <person name="Barabote R.D."/>
            <person name="Saunders E."/>
            <person name="Han C.S."/>
            <person name="Detter J.C."/>
            <person name="Richardson P."/>
            <person name="Brettin T.S."/>
            <person name="Das A."/>
            <person name="Ljungdahl L.G."/>
            <person name="Ragsdale S.W."/>
        </authorList>
    </citation>
    <scope>NUCLEOTIDE SEQUENCE [LARGE SCALE GENOMIC DNA]</scope>
    <source>
        <strain>ATCC 39073 / JCM 9320</strain>
    </source>
</reference>
<gene>
    <name evidence="2" type="primary">tuf</name>
    <name type="ordered locus">Moth_2462</name>
</gene>